<gene>
    <name evidence="1" type="primary">recO</name>
    <name type="ordered locus">ECIAI39_2770</name>
</gene>
<comment type="function">
    <text evidence="1">Involved in DNA repair and RecF pathway recombination.</text>
</comment>
<comment type="subunit">
    <text evidence="1">Monomer.</text>
</comment>
<comment type="similarity">
    <text evidence="1">Belongs to the RecO family.</text>
</comment>
<protein>
    <recommendedName>
        <fullName evidence="1">DNA repair protein RecO</fullName>
    </recommendedName>
    <alternativeName>
        <fullName evidence="1">Recombination protein O</fullName>
    </alternativeName>
</protein>
<name>RECO_ECO7I</name>
<keyword id="KW-0227">DNA damage</keyword>
<keyword id="KW-0233">DNA recombination</keyword>
<keyword id="KW-0234">DNA repair</keyword>
<dbReference type="EMBL" id="CU928164">
    <property type="protein sequence ID" value="CAR18892.1"/>
    <property type="molecule type" value="Genomic_DNA"/>
</dbReference>
<dbReference type="RefSeq" id="WP_000399393.1">
    <property type="nucleotide sequence ID" value="NC_011750.1"/>
</dbReference>
<dbReference type="RefSeq" id="YP_002408708.1">
    <property type="nucleotide sequence ID" value="NC_011750.1"/>
</dbReference>
<dbReference type="SMR" id="B7NRL8"/>
<dbReference type="STRING" id="585057.ECIAI39_2770"/>
<dbReference type="GeneID" id="93774526"/>
<dbReference type="KEGG" id="ect:ECIAI39_2770"/>
<dbReference type="PATRIC" id="fig|585057.6.peg.2878"/>
<dbReference type="HOGENOM" id="CLU_066645_1_0_6"/>
<dbReference type="Proteomes" id="UP000000749">
    <property type="component" value="Chromosome"/>
</dbReference>
<dbReference type="GO" id="GO:0043590">
    <property type="term" value="C:bacterial nucleoid"/>
    <property type="evidence" value="ECO:0007669"/>
    <property type="project" value="TreeGrafter"/>
</dbReference>
<dbReference type="GO" id="GO:0006310">
    <property type="term" value="P:DNA recombination"/>
    <property type="evidence" value="ECO:0007669"/>
    <property type="project" value="UniProtKB-UniRule"/>
</dbReference>
<dbReference type="GO" id="GO:0006302">
    <property type="term" value="P:double-strand break repair"/>
    <property type="evidence" value="ECO:0007669"/>
    <property type="project" value="TreeGrafter"/>
</dbReference>
<dbReference type="FunFam" id="1.20.1440.120:FF:000001">
    <property type="entry name" value="DNA repair protein RecO"/>
    <property type="match status" value="1"/>
</dbReference>
<dbReference type="FunFam" id="2.40.50.140:FF:000074">
    <property type="entry name" value="DNA repair protein RecO"/>
    <property type="match status" value="1"/>
</dbReference>
<dbReference type="Gene3D" id="2.40.50.140">
    <property type="entry name" value="Nucleic acid-binding proteins"/>
    <property type="match status" value="1"/>
</dbReference>
<dbReference type="Gene3D" id="1.20.1440.120">
    <property type="entry name" value="Recombination protein O, C-terminal domain"/>
    <property type="match status" value="1"/>
</dbReference>
<dbReference type="HAMAP" id="MF_00201">
    <property type="entry name" value="RecO"/>
    <property type="match status" value="1"/>
</dbReference>
<dbReference type="InterPro" id="IPR037278">
    <property type="entry name" value="ARFGAP/RecO"/>
</dbReference>
<dbReference type="InterPro" id="IPR022572">
    <property type="entry name" value="DNA_rep/recomb_RecO_N"/>
</dbReference>
<dbReference type="InterPro" id="IPR012340">
    <property type="entry name" value="NA-bd_OB-fold"/>
</dbReference>
<dbReference type="InterPro" id="IPR003717">
    <property type="entry name" value="RecO"/>
</dbReference>
<dbReference type="InterPro" id="IPR042242">
    <property type="entry name" value="RecO_C"/>
</dbReference>
<dbReference type="NCBIfam" id="TIGR00613">
    <property type="entry name" value="reco"/>
    <property type="match status" value="1"/>
</dbReference>
<dbReference type="PANTHER" id="PTHR33991">
    <property type="entry name" value="DNA REPAIR PROTEIN RECO"/>
    <property type="match status" value="1"/>
</dbReference>
<dbReference type="PANTHER" id="PTHR33991:SF1">
    <property type="entry name" value="DNA REPAIR PROTEIN RECO"/>
    <property type="match status" value="1"/>
</dbReference>
<dbReference type="Pfam" id="PF02565">
    <property type="entry name" value="RecO_C"/>
    <property type="match status" value="1"/>
</dbReference>
<dbReference type="Pfam" id="PF11967">
    <property type="entry name" value="RecO_N"/>
    <property type="match status" value="1"/>
</dbReference>
<dbReference type="SUPFAM" id="SSF57863">
    <property type="entry name" value="ArfGap/RecO-like zinc finger"/>
    <property type="match status" value="1"/>
</dbReference>
<dbReference type="SUPFAM" id="SSF50249">
    <property type="entry name" value="Nucleic acid-binding proteins"/>
    <property type="match status" value="1"/>
</dbReference>
<evidence type="ECO:0000255" key="1">
    <source>
        <dbReference type="HAMAP-Rule" id="MF_00201"/>
    </source>
</evidence>
<sequence length="242" mass="27363">MEGWQRAFVLHSRPWSETSLMLDVFTEESGRVRLVAKGARSKRSTLKGALQPFTPLLLRFGGRGEVKTLRSAEAVSLALPLSGITLYSGLYINELLSRVLEYETRFSELFFDYLHCIQSLAGATGTPEPALRRFELALLGHLGYGVNFTHCAGSGEPVDDTMTYRYREEKGFIASVVIDNKTFTGRQLKALNAREFPDADTLRAAKRFTRMALKPYLGGKPLKSRELFRQFMPKRTVKTHYE</sequence>
<reference key="1">
    <citation type="journal article" date="2009" name="PLoS Genet.">
        <title>Organised genome dynamics in the Escherichia coli species results in highly diverse adaptive paths.</title>
        <authorList>
            <person name="Touchon M."/>
            <person name="Hoede C."/>
            <person name="Tenaillon O."/>
            <person name="Barbe V."/>
            <person name="Baeriswyl S."/>
            <person name="Bidet P."/>
            <person name="Bingen E."/>
            <person name="Bonacorsi S."/>
            <person name="Bouchier C."/>
            <person name="Bouvet O."/>
            <person name="Calteau A."/>
            <person name="Chiapello H."/>
            <person name="Clermont O."/>
            <person name="Cruveiller S."/>
            <person name="Danchin A."/>
            <person name="Diard M."/>
            <person name="Dossat C."/>
            <person name="Karoui M.E."/>
            <person name="Frapy E."/>
            <person name="Garry L."/>
            <person name="Ghigo J.M."/>
            <person name="Gilles A.M."/>
            <person name="Johnson J."/>
            <person name="Le Bouguenec C."/>
            <person name="Lescat M."/>
            <person name="Mangenot S."/>
            <person name="Martinez-Jehanne V."/>
            <person name="Matic I."/>
            <person name="Nassif X."/>
            <person name="Oztas S."/>
            <person name="Petit M.A."/>
            <person name="Pichon C."/>
            <person name="Rouy Z."/>
            <person name="Ruf C.S."/>
            <person name="Schneider D."/>
            <person name="Tourret J."/>
            <person name="Vacherie B."/>
            <person name="Vallenet D."/>
            <person name="Medigue C."/>
            <person name="Rocha E.P.C."/>
            <person name="Denamur E."/>
        </authorList>
    </citation>
    <scope>NUCLEOTIDE SEQUENCE [LARGE SCALE GENOMIC DNA]</scope>
    <source>
        <strain>IAI39 / ExPEC</strain>
    </source>
</reference>
<organism>
    <name type="scientific">Escherichia coli O7:K1 (strain IAI39 / ExPEC)</name>
    <dbReference type="NCBI Taxonomy" id="585057"/>
    <lineage>
        <taxon>Bacteria</taxon>
        <taxon>Pseudomonadati</taxon>
        <taxon>Pseudomonadota</taxon>
        <taxon>Gammaproteobacteria</taxon>
        <taxon>Enterobacterales</taxon>
        <taxon>Enterobacteriaceae</taxon>
        <taxon>Escherichia</taxon>
    </lineage>
</organism>
<accession>B7NRL8</accession>
<proteinExistence type="inferred from homology"/>
<feature type="chain" id="PRO_1000118717" description="DNA repair protein RecO">
    <location>
        <begin position="1"/>
        <end position="242"/>
    </location>
</feature>